<feature type="chain" id="PRO_0000326538" description="Adenosylcobalamin-dependent ribonucleoside-triphosphate reductase">
    <location>
        <begin position="1"/>
        <end position="748"/>
    </location>
</feature>
<feature type="region of interest" description="Effector region-1" evidence="1">
    <location>
        <begin position="151"/>
        <end position="162"/>
    </location>
</feature>
<feature type="region of interest" description="Effector region-2" evidence="1">
    <location>
        <begin position="172"/>
        <end position="320"/>
    </location>
</feature>
<feature type="region of interest" description="Adenosylcobalamin-binding-1" evidence="1">
    <location>
        <begin position="572"/>
        <end position="633"/>
    </location>
</feature>
<feature type="region of interest" description="Adenosylcobalamin-binding-2" evidence="1">
    <location>
        <begin position="692"/>
        <end position="733"/>
    </location>
</feature>
<feature type="active site" evidence="1">
    <location>
        <position position="415"/>
    </location>
</feature>
<feature type="active site" evidence="1">
    <location>
        <position position="417"/>
    </location>
</feature>
<feature type="disulfide bond" description="Redox-active" evidence="1">
    <location>
        <begin position="123"/>
        <end position="426"/>
    </location>
</feature>
<accession>Q035U1</accession>
<name>RTPR_LACP3</name>
<comment type="catalytic activity">
    <reaction>
        <text>a 2'-deoxyribonucleoside 5'-triphosphate + [thioredoxin]-disulfide + H2O = a ribonucleoside 5'-triphosphate + [thioredoxin]-dithiol</text>
        <dbReference type="Rhea" id="RHEA:12701"/>
        <dbReference type="Rhea" id="RHEA-COMP:10698"/>
        <dbReference type="Rhea" id="RHEA-COMP:10700"/>
        <dbReference type="ChEBI" id="CHEBI:15377"/>
        <dbReference type="ChEBI" id="CHEBI:29950"/>
        <dbReference type="ChEBI" id="CHEBI:50058"/>
        <dbReference type="ChEBI" id="CHEBI:61557"/>
        <dbReference type="ChEBI" id="CHEBI:61560"/>
        <dbReference type="EC" id="1.17.4.2"/>
    </reaction>
</comment>
<comment type="cofactor">
    <cofactor evidence="1">
        <name>adenosylcob(III)alamin</name>
        <dbReference type="ChEBI" id="CHEBI:18408"/>
    </cofactor>
</comment>
<comment type="activity regulation">
    <text evidence="1">Allosterically regulated by ATP and dNTP.</text>
</comment>
<comment type="subunit">
    <text evidence="1">Monomer.</text>
</comment>
<comment type="similarity">
    <text evidence="2">Belongs to the class II ribonucleoside-triphosphate reductase family.</text>
</comment>
<proteinExistence type="inferred from homology"/>
<dbReference type="EC" id="1.17.4.2"/>
<dbReference type="EMBL" id="CP000423">
    <property type="protein sequence ID" value="ABJ71031.1"/>
    <property type="molecule type" value="Genomic_DNA"/>
</dbReference>
<dbReference type="RefSeq" id="WP_011674848.1">
    <property type="nucleotide sequence ID" value="NC_008526.1"/>
</dbReference>
<dbReference type="RefSeq" id="YP_807473.1">
    <property type="nucleotide sequence ID" value="NC_008526.1"/>
</dbReference>
<dbReference type="SMR" id="Q035U1"/>
<dbReference type="STRING" id="321967.LSEI_2287"/>
<dbReference type="PaxDb" id="321967-LSEI_2287"/>
<dbReference type="KEGG" id="lca:LSEI_2287"/>
<dbReference type="PATRIC" id="fig|321967.11.peg.2250"/>
<dbReference type="HOGENOM" id="CLU_002384_0_0_9"/>
<dbReference type="Proteomes" id="UP000001651">
    <property type="component" value="Chromosome"/>
</dbReference>
<dbReference type="GO" id="GO:0031419">
    <property type="term" value="F:cobalamin binding"/>
    <property type="evidence" value="ECO:0007669"/>
    <property type="project" value="UniProtKB-KW"/>
</dbReference>
<dbReference type="GO" id="GO:0000166">
    <property type="term" value="F:nucleotide binding"/>
    <property type="evidence" value="ECO:0007669"/>
    <property type="project" value="InterPro"/>
</dbReference>
<dbReference type="GO" id="GO:0004748">
    <property type="term" value="F:ribonucleoside-diphosphate reductase activity, thioredoxin disulfide as acceptor"/>
    <property type="evidence" value="ECO:0007669"/>
    <property type="project" value="InterPro"/>
</dbReference>
<dbReference type="GO" id="GO:0008998">
    <property type="term" value="F:ribonucleoside-triphosphate reductase (thioredoxin) activity"/>
    <property type="evidence" value="ECO:0007669"/>
    <property type="project" value="UniProtKB-EC"/>
</dbReference>
<dbReference type="GO" id="GO:0006260">
    <property type="term" value="P:DNA replication"/>
    <property type="evidence" value="ECO:0007669"/>
    <property type="project" value="UniProtKB-KW"/>
</dbReference>
<dbReference type="Gene3D" id="3.20.70.20">
    <property type="match status" value="1"/>
</dbReference>
<dbReference type="Gene3D" id="3.30.1620.10">
    <property type="entry name" value="b-12 dependent (class ii) ribonucleotide reductase, Chain A, Domain 2"/>
    <property type="match status" value="1"/>
</dbReference>
<dbReference type="Gene3D" id="3.90.1390.10">
    <property type="entry name" value="b-12 dependent (class ii) ribonucleotide reductase, chain A, domain 3"/>
    <property type="match status" value="1"/>
</dbReference>
<dbReference type="InterPro" id="IPR050862">
    <property type="entry name" value="RdRp_reductase_class-2"/>
</dbReference>
<dbReference type="InterPro" id="IPR054158">
    <property type="entry name" value="RNR-II_ins_dom"/>
</dbReference>
<dbReference type="InterPro" id="IPR040763">
    <property type="entry name" value="RNR_alpha_hel"/>
</dbReference>
<dbReference type="InterPro" id="IPR013345">
    <property type="entry name" value="RTP_Rdtase_AdoCbl-dep"/>
</dbReference>
<dbReference type="NCBIfam" id="TIGR02505">
    <property type="entry name" value="RTPR"/>
    <property type="match status" value="1"/>
</dbReference>
<dbReference type="PANTHER" id="PTHR43371:SF1">
    <property type="entry name" value="RIBONUCLEOSIDE-DIPHOSPHATE REDUCTASE"/>
    <property type="match status" value="1"/>
</dbReference>
<dbReference type="PANTHER" id="PTHR43371">
    <property type="entry name" value="VITAMIN B12-DEPENDENT RIBONUCLEOTIDE REDUCTASE"/>
    <property type="match status" value="1"/>
</dbReference>
<dbReference type="Pfam" id="PF21995">
    <property type="entry name" value="RNR-II_ins_dom"/>
    <property type="match status" value="1"/>
</dbReference>
<dbReference type="Pfam" id="PF17975">
    <property type="entry name" value="RNR_Alpha"/>
    <property type="match status" value="1"/>
</dbReference>
<dbReference type="SUPFAM" id="SSF51998">
    <property type="entry name" value="PFL-like glycyl radical enzymes"/>
    <property type="match status" value="1"/>
</dbReference>
<sequence length="748" mass="82300">MQVMTKPITLAPAFIAEVKKEIKPHWGELGWVTYKRTYARWLPDAQRTENWDETVKRVVEGNINLDPRLHTANPDPKVVETLQKEARNLFKLIYGLAGTPSGRNLWISGTDYQKRNGDALNNCWFIAIRPQPYGQSHIVPEDYPASQPAVSMPYSFMFDELMKGGGVGFSVTKDNIAKLPPVATKLELTVVIGRNSASYADSLKMGAVDRDEWEKAHAGEQADHCALPDTREGWVLANAKVIDHHFAATNPSGQTKLVLDITNIRPKGARIHGFGGTASGPMPLIEMLLDINKLLNARVGQHLTAVDATDIGNLIGKTVVAGNVRRSAEMSLGSADDEDFITMKQDQKQLYHHRWASNNSVAINTQFDAYSPIALAIAKNGEPGIVNLELSRRFGRIADRENAENDPDVEGTNPCGEISLANGEPCNLFEVFPVVAVEQGWKLKQAFTLAARFAKRVTFSHYDWQVSRDIIKKNRRIGVSMSGIQDWFLNDFGRRVVSGFESVVDPQTGKMVQKPIYDPEIKQAVDGLYHTVVDADQAYSDALGCEPSRKHTTVKPSGTVAKLAGVSEGMHFHYAGYLIQRIRFQGNDPLLPALQACGYHIEPDVYTKGTMVVEFPIRAAHADDPAFASAGTVSIAEQIATQAFLQTYWSDNAVSCTVTFQPKEADQIAGLLSQYRHVIKSTSMLPYVGAGFKQAPKEPIDVKTYKQKCAAIHGSVAAVFAVQNADHDQKDLELVDQTDCAGGACPIK</sequence>
<evidence type="ECO:0000250" key="1"/>
<evidence type="ECO:0000305" key="2"/>
<reference key="1">
    <citation type="journal article" date="2006" name="Proc. Natl. Acad. Sci. U.S.A.">
        <title>Comparative genomics of the lactic acid bacteria.</title>
        <authorList>
            <person name="Makarova K.S."/>
            <person name="Slesarev A."/>
            <person name="Wolf Y.I."/>
            <person name="Sorokin A."/>
            <person name="Mirkin B."/>
            <person name="Koonin E.V."/>
            <person name="Pavlov A."/>
            <person name="Pavlova N."/>
            <person name="Karamychev V."/>
            <person name="Polouchine N."/>
            <person name="Shakhova V."/>
            <person name="Grigoriev I."/>
            <person name="Lou Y."/>
            <person name="Rohksar D."/>
            <person name="Lucas S."/>
            <person name="Huang K."/>
            <person name="Goodstein D.M."/>
            <person name="Hawkins T."/>
            <person name="Plengvidhya V."/>
            <person name="Welker D."/>
            <person name="Hughes J."/>
            <person name="Goh Y."/>
            <person name="Benson A."/>
            <person name="Baldwin K."/>
            <person name="Lee J.-H."/>
            <person name="Diaz-Muniz I."/>
            <person name="Dosti B."/>
            <person name="Smeianov V."/>
            <person name="Wechter W."/>
            <person name="Barabote R."/>
            <person name="Lorca G."/>
            <person name="Altermann E."/>
            <person name="Barrangou R."/>
            <person name="Ganesan B."/>
            <person name="Xie Y."/>
            <person name="Rawsthorne H."/>
            <person name="Tamir D."/>
            <person name="Parker C."/>
            <person name="Breidt F."/>
            <person name="Broadbent J.R."/>
            <person name="Hutkins R."/>
            <person name="O'Sullivan D."/>
            <person name="Steele J."/>
            <person name="Unlu G."/>
            <person name="Saier M.H. Jr."/>
            <person name="Klaenhammer T."/>
            <person name="Richardson P."/>
            <person name="Kozyavkin S."/>
            <person name="Weimer B.C."/>
            <person name="Mills D.A."/>
        </authorList>
    </citation>
    <scope>NUCLEOTIDE SEQUENCE [LARGE SCALE GENOMIC DNA]</scope>
    <source>
        <strain>ATCC 334 / BCRC 17002 / CCUG 31169 / CIP 107868 / KCTC 3260 / NRRL B-441</strain>
    </source>
</reference>
<keyword id="KW-0021">Allosteric enzyme</keyword>
<keyword id="KW-0846">Cobalamin</keyword>
<keyword id="KW-0170">Cobalt</keyword>
<keyword id="KW-1015">Disulfide bond</keyword>
<keyword id="KW-0235">DNA replication</keyword>
<keyword id="KW-0560">Oxidoreductase</keyword>
<keyword id="KW-0676">Redox-active center</keyword>
<keyword id="KW-1185">Reference proteome</keyword>
<protein>
    <recommendedName>
        <fullName>Adenosylcobalamin-dependent ribonucleoside-triphosphate reductase</fullName>
        <shortName>RTPR</shortName>
        <ecNumber>1.17.4.2</ecNumber>
    </recommendedName>
</protein>
<gene>
    <name type="primary">rtpR</name>
    <name type="ordered locus">LSEI_2287</name>
</gene>
<organism>
    <name type="scientific">Lacticaseibacillus paracasei (strain ATCC 334 / BCRC 17002 / CCUG 31169 / CIP 107868 / KCTC 3260 / NRRL B-441)</name>
    <name type="common">Lactobacillus paracasei</name>
    <dbReference type="NCBI Taxonomy" id="321967"/>
    <lineage>
        <taxon>Bacteria</taxon>
        <taxon>Bacillati</taxon>
        <taxon>Bacillota</taxon>
        <taxon>Bacilli</taxon>
        <taxon>Lactobacillales</taxon>
        <taxon>Lactobacillaceae</taxon>
        <taxon>Lacticaseibacillus</taxon>
    </lineage>
</organism>